<feature type="chain" id="PRO_0000260509" description="Protein MEMO1">
    <location>
        <begin position="1"/>
        <end position="297"/>
    </location>
</feature>
<feature type="modified residue" description="Phosphotyrosine" evidence="2">
    <location>
        <position position="210"/>
    </location>
</feature>
<protein>
    <recommendedName>
        <fullName>Protein MEMO1</fullName>
    </recommendedName>
    <alternativeName>
        <fullName>Mediator of ErbB2-driven cell motility 1</fullName>
        <shortName>Memo-1</shortName>
    </alternativeName>
</protein>
<organism>
    <name type="scientific">Macaca fascicularis</name>
    <name type="common">Crab-eating macaque</name>
    <name type="synonym">Cynomolgus monkey</name>
    <dbReference type="NCBI Taxonomy" id="9541"/>
    <lineage>
        <taxon>Eukaryota</taxon>
        <taxon>Metazoa</taxon>
        <taxon>Chordata</taxon>
        <taxon>Craniata</taxon>
        <taxon>Vertebrata</taxon>
        <taxon>Euteleostomi</taxon>
        <taxon>Mammalia</taxon>
        <taxon>Eutheria</taxon>
        <taxon>Euarchontoglires</taxon>
        <taxon>Primates</taxon>
        <taxon>Haplorrhini</taxon>
        <taxon>Catarrhini</taxon>
        <taxon>Cercopithecidae</taxon>
        <taxon>Cercopithecinae</taxon>
        <taxon>Macaca</taxon>
    </lineage>
</organism>
<reference key="1">
    <citation type="submission" date="2005-06" db="EMBL/GenBank/DDBJ databases">
        <title>DNA sequences of macaque genes expressed in brain or testis and its evolutionary implications.</title>
        <authorList>
            <consortium name="International consortium for macaque cDNA sequencing and analysis"/>
        </authorList>
    </citation>
    <scope>NUCLEOTIDE SEQUENCE [LARGE SCALE MRNA]</scope>
    <source>
        <tissue>Testis</tissue>
    </source>
</reference>
<comment type="function">
    <text evidence="1">May control cell migration by relaying extracellular chemotactic signals to the microtubule cytoskeleton. Mediator of ERBB2 signaling. The MEMO1-RHOA-DIAPH1 signaling pathway plays an important role in ERBB2-dependent stabilization of microtubules at the cell cortex. It controls the localization of APC and CLASP2 to the cell membrane, via the regulation of GSK3B activity. In turn, membrane-bound APC allows the localization of the MACF1 to the cell membrane, which is required for microtubule capture and stabilization (By similarity).</text>
</comment>
<comment type="subunit">
    <text evidence="1">Interacts with ERBB2.</text>
</comment>
<comment type="similarity">
    <text evidence="3">Belongs to the MEMO1 family.</text>
</comment>
<proteinExistence type="evidence at transcript level"/>
<name>MEMO1_MACFA</name>
<sequence>MSNRVVCREASHAGSWYTASGPQLNAQLEGWLSQVQSTKRPARAIIAPHAGYTYCGSCAAHAYKQVDPSITRRIFILGPSHHVPLSRCALSSVDIYRTPLYDLRIDQKIYGELWKTGMFERMSLQTDEDEHSIEMHLPYTAKAMESHKDEFTIIPVLVGALSESKEQEFGKLFSKYLADPSNLFVVSSDFCHWGQRFRYSYYDESQGEIYRSIEHLDKMGMSIIEQLDPVSFSNYLKKYHNTICGRHPIGVLLNAITELQKNGMNMSFSFLNYAQSSQCRNWQDSSVSYAAGALTVH</sequence>
<accession>Q4R6D9</accession>
<dbReference type="EMBL" id="AB169245">
    <property type="protein sequence ID" value="BAE01336.1"/>
    <property type="molecule type" value="mRNA"/>
</dbReference>
<dbReference type="RefSeq" id="NP_001271481.1">
    <property type="nucleotide sequence ID" value="NM_001284552.1"/>
</dbReference>
<dbReference type="RefSeq" id="XP_045225481.1">
    <property type="nucleotide sequence ID" value="XM_045369546.2"/>
</dbReference>
<dbReference type="SMR" id="Q4R6D9"/>
<dbReference type="STRING" id="9541.ENSMFAP00000040597"/>
<dbReference type="GeneID" id="102146322"/>
<dbReference type="VEuPathDB" id="HostDB:ENSMFAG00000046335"/>
<dbReference type="eggNOG" id="KOG3086">
    <property type="taxonomic scope" value="Eukaryota"/>
</dbReference>
<dbReference type="OMA" id="EQEAQYG"/>
<dbReference type="Proteomes" id="UP000233100">
    <property type="component" value="Chromosome 13"/>
</dbReference>
<dbReference type="GO" id="GO:0032886">
    <property type="term" value="P:regulation of microtubule-based process"/>
    <property type="evidence" value="ECO:0000250"/>
    <property type="project" value="UniProtKB"/>
</dbReference>
<dbReference type="CDD" id="cd07361">
    <property type="entry name" value="MEMO_like"/>
    <property type="match status" value="1"/>
</dbReference>
<dbReference type="FunFam" id="3.40.830.10:FF:000002">
    <property type="entry name" value="MEMO1 isoform 1"/>
    <property type="match status" value="1"/>
</dbReference>
<dbReference type="Gene3D" id="3.40.830.10">
    <property type="entry name" value="LigB-like"/>
    <property type="match status" value="1"/>
</dbReference>
<dbReference type="HAMAP" id="MF_00055">
    <property type="entry name" value="MEMO1"/>
    <property type="match status" value="1"/>
</dbReference>
<dbReference type="InterPro" id="IPR002737">
    <property type="entry name" value="MEMO1_fam"/>
</dbReference>
<dbReference type="NCBIfam" id="TIGR04336">
    <property type="entry name" value="AmmeMemoSam_B"/>
    <property type="match status" value="1"/>
</dbReference>
<dbReference type="PANTHER" id="PTHR11060">
    <property type="entry name" value="PROTEIN MEMO1"/>
    <property type="match status" value="1"/>
</dbReference>
<dbReference type="PANTHER" id="PTHR11060:SF0">
    <property type="entry name" value="PROTEIN MEMO1"/>
    <property type="match status" value="1"/>
</dbReference>
<dbReference type="Pfam" id="PF01875">
    <property type="entry name" value="Memo"/>
    <property type="match status" value="1"/>
</dbReference>
<keyword id="KW-0597">Phosphoprotein</keyword>
<keyword id="KW-1185">Reference proteome</keyword>
<gene>
    <name type="primary">MEMO1</name>
    <name type="ORF">QtsA-18196</name>
</gene>
<evidence type="ECO:0000250" key="1"/>
<evidence type="ECO:0000250" key="2">
    <source>
        <dbReference type="UniProtKB" id="Q91VH6"/>
    </source>
</evidence>
<evidence type="ECO:0000305" key="3"/>